<keyword id="KW-0687">Ribonucleoprotein</keyword>
<keyword id="KW-0689">Ribosomal protein</keyword>
<comment type="subunit">
    <text evidence="1">Part of the 50S ribosomal subunit.</text>
</comment>
<comment type="similarity">
    <text evidence="1">Belongs to the universal ribosomal protein uL30 family.</text>
</comment>
<feature type="chain" id="PRO_1000144643" description="Large ribosomal subunit protein uL30">
    <location>
        <begin position="1"/>
        <end position="59"/>
    </location>
</feature>
<evidence type="ECO:0000255" key="1">
    <source>
        <dbReference type="HAMAP-Rule" id="MF_01371"/>
    </source>
</evidence>
<evidence type="ECO:0000305" key="2"/>
<gene>
    <name evidence="1" type="primary">rpmD</name>
    <name type="ordered locus">APJL_1813</name>
</gene>
<proteinExistence type="inferred from homology"/>
<protein>
    <recommendedName>
        <fullName evidence="1">Large ribosomal subunit protein uL30</fullName>
    </recommendedName>
    <alternativeName>
        <fullName evidence="2">50S ribosomal protein L30</fullName>
    </alternativeName>
</protein>
<dbReference type="EMBL" id="CP000687">
    <property type="protein sequence ID" value="ABY70363.1"/>
    <property type="molecule type" value="Genomic_DNA"/>
</dbReference>
<dbReference type="RefSeq" id="WP_005599315.1">
    <property type="nucleotide sequence ID" value="NC_010278.1"/>
</dbReference>
<dbReference type="SMR" id="B0BSU9"/>
<dbReference type="GeneID" id="92743637"/>
<dbReference type="KEGG" id="apj:APJL_1813"/>
<dbReference type="HOGENOM" id="CLU_131047_1_4_6"/>
<dbReference type="Proteomes" id="UP000008547">
    <property type="component" value="Chromosome"/>
</dbReference>
<dbReference type="GO" id="GO:0022625">
    <property type="term" value="C:cytosolic large ribosomal subunit"/>
    <property type="evidence" value="ECO:0007669"/>
    <property type="project" value="TreeGrafter"/>
</dbReference>
<dbReference type="GO" id="GO:0003735">
    <property type="term" value="F:structural constituent of ribosome"/>
    <property type="evidence" value="ECO:0007669"/>
    <property type="project" value="InterPro"/>
</dbReference>
<dbReference type="GO" id="GO:0006412">
    <property type="term" value="P:translation"/>
    <property type="evidence" value="ECO:0007669"/>
    <property type="project" value="UniProtKB-UniRule"/>
</dbReference>
<dbReference type="CDD" id="cd01658">
    <property type="entry name" value="Ribosomal_L30"/>
    <property type="match status" value="1"/>
</dbReference>
<dbReference type="FunFam" id="3.30.1390.20:FF:000001">
    <property type="entry name" value="50S ribosomal protein L30"/>
    <property type="match status" value="1"/>
</dbReference>
<dbReference type="Gene3D" id="3.30.1390.20">
    <property type="entry name" value="Ribosomal protein L30, ferredoxin-like fold domain"/>
    <property type="match status" value="1"/>
</dbReference>
<dbReference type="HAMAP" id="MF_01371_B">
    <property type="entry name" value="Ribosomal_uL30_B"/>
    <property type="match status" value="1"/>
</dbReference>
<dbReference type="InterPro" id="IPR036919">
    <property type="entry name" value="Ribo_uL30_ferredoxin-like_sf"/>
</dbReference>
<dbReference type="InterPro" id="IPR005996">
    <property type="entry name" value="Ribosomal_uL30_bac-type"/>
</dbReference>
<dbReference type="InterPro" id="IPR018038">
    <property type="entry name" value="Ribosomal_uL30_CS"/>
</dbReference>
<dbReference type="InterPro" id="IPR016082">
    <property type="entry name" value="Ribosomal_uL30_ferredoxin-like"/>
</dbReference>
<dbReference type="NCBIfam" id="TIGR01308">
    <property type="entry name" value="rpmD_bact"/>
    <property type="match status" value="1"/>
</dbReference>
<dbReference type="PANTHER" id="PTHR15892:SF2">
    <property type="entry name" value="LARGE RIBOSOMAL SUBUNIT PROTEIN UL30M"/>
    <property type="match status" value="1"/>
</dbReference>
<dbReference type="PANTHER" id="PTHR15892">
    <property type="entry name" value="MITOCHONDRIAL RIBOSOMAL PROTEIN L30"/>
    <property type="match status" value="1"/>
</dbReference>
<dbReference type="Pfam" id="PF00327">
    <property type="entry name" value="Ribosomal_L30"/>
    <property type="match status" value="1"/>
</dbReference>
<dbReference type="PIRSF" id="PIRSF002211">
    <property type="entry name" value="Ribosomal_L30_bac-type"/>
    <property type="match status" value="1"/>
</dbReference>
<dbReference type="SUPFAM" id="SSF55129">
    <property type="entry name" value="Ribosomal protein L30p/L7e"/>
    <property type="match status" value="1"/>
</dbReference>
<dbReference type="PROSITE" id="PS00634">
    <property type="entry name" value="RIBOSOMAL_L30"/>
    <property type="match status" value="1"/>
</dbReference>
<name>RL30_ACTPJ</name>
<accession>B0BSU9</accession>
<reference key="1">
    <citation type="journal article" date="2008" name="PLoS ONE">
        <title>Genome biology of Actinobacillus pleuropneumoniae JL03, an isolate of serotype 3 prevalent in China.</title>
        <authorList>
            <person name="Xu Z."/>
            <person name="Zhou Y."/>
            <person name="Li L."/>
            <person name="Zhou R."/>
            <person name="Xiao S."/>
            <person name="Wan Y."/>
            <person name="Zhang S."/>
            <person name="Wang K."/>
            <person name="Li W."/>
            <person name="Li L."/>
            <person name="Jin H."/>
            <person name="Kang M."/>
            <person name="Dalai B."/>
            <person name="Li T."/>
            <person name="Liu L."/>
            <person name="Cheng Y."/>
            <person name="Zhang L."/>
            <person name="Xu T."/>
            <person name="Zheng H."/>
            <person name="Pu S."/>
            <person name="Wang B."/>
            <person name="Gu W."/>
            <person name="Zhang X.L."/>
            <person name="Zhu G.-F."/>
            <person name="Wang S."/>
            <person name="Zhao G.-P."/>
            <person name="Chen H."/>
        </authorList>
    </citation>
    <scope>NUCLEOTIDE SEQUENCE [LARGE SCALE GENOMIC DNA]</scope>
    <source>
        <strain>JL03</strain>
    </source>
</reference>
<sequence length="59" mass="6653">MAKTIKVTQTRSSIARLPKHKATLKGLGLRHIRHTVELIDTPAVRGMINQVSYMVKVEE</sequence>
<organism>
    <name type="scientific">Actinobacillus pleuropneumoniae serotype 3 (strain JL03)</name>
    <dbReference type="NCBI Taxonomy" id="434271"/>
    <lineage>
        <taxon>Bacteria</taxon>
        <taxon>Pseudomonadati</taxon>
        <taxon>Pseudomonadota</taxon>
        <taxon>Gammaproteobacteria</taxon>
        <taxon>Pasteurellales</taxon>
        <taxon>Pasteurellaceae</taxon>
        <taxon>Actinobacillus</taxon>
    </lineage>
</organism>